<accession>Q9CDG1</accession>
<evidence type="ECO:0000255" key="1">
    <source>
        <dbReference type="HAMAP-Rule" id="MF_00054"/>
    </source>
</evidence>
<feature type="chain" id="PRO_0000091138" description="Elongation factor G">
    <location>
        <begin position="1"/>
        <end position="709"/>
    </location>
</feature>
<feature type="domain" description="tr-type G">
    <location>
        <begin position="8"/>
        <end position="297"/>
    </location>
</feature>
<feature type="binding site" evidence="1">
    <location>
        <begin position="17"/>
        <end position="24"/>
    </location>
    <ligand>
        <name>GTP</name>
        <dbReference type="ChEBI" id="CHEBI:37565"/>
    </ligand>
</feature>
<feature type="binding site" evidence="1">
    <location>
        <begin position="81"/>
        <end position="85"/>
    </location>
    <ligand>
        <name>GTP</name>
        <dbReference type="ChEBI" id="CHEBI:37565"/>
    </ligand>
</feature>
<feature type="binding site" evidence="1">
    <location>
        <begin position="135"/>
        <end position="138"/>
    </location>
    <ligand>
        <name>GTP</name>
        <dbReference type="ChEBI" id="CHEBI:37565"/>
    </ligand>
</feature>
<comment type="function">
    <text evidence="1">Catalyzes the GTP-dependent ribosomal translocation step during translation elongation. During this step, the ribosome changes from the pre-translocational (PRE) to the post-translocational (POST) state as the newly formed A-site-bound peptidyl-tRNA and P-site-bound deacylated tRNA move to the P and E sites, respectively. Catalyzes the coordinated movement of the two tRNA molecules, the mRNA and conformational changes in the ribosome.</text>
</comment>
<comment type="subcellular location">
    <subcellularLocation>
        <location evidence="1">Cytoplasm</location>
    </subcellularLocation>
</comment>
<comment type="similarity">
    <text evidence="1">Belongs to the TRAFAC class translation factor GTPase superfamily. Classic translation factor GTPase family. EF-G/EF-2 subfamily.</text>
</comment>
<protein>
    <recommendedName>
        <fullName evidence="1">Elongation factor G</fullName>
        <shortName evidence="1">EF-G</shortName>
    </recommendedName>
</protein>
<dbReference type="EMBL" id="AE005176">
    <property type="protein sequence ID" value="AAK06358.1"/>
    <property type="molecule type" value="Genomic_DNA"/>
</dbReference>
<dbReference type="PIR" id="D86907">
    <property type="entry name" value="D86907"/>
</dbReference>
<dbReference type="RefSeq" id="NP_268417.1">
    <property type="nucleotide sequence ID" value="NC_002662.1"/>
</dbReference>
<dbReference type="RefSeq" id="WP_003129877.1">
    <property type="nucleotide sequence ID" value="NC_002662.1"/>
</dbReference>
<dbReference type="SMR" id="Q9CDG1"/>
<dbReference type="PaxDb" id="272623-L0368"/>
<dbReference type="EnsemblBacteria" id="AAK06358">
    <property type="protein sequence ID" value="AAK06358"/>
    <property type="gene ID" value="L0368"/>
</dbReference>
<dbReference type="GeneID" id="89634662"/>
<dbReference type="KEGG" id="lla:L0368"/>
<dbReference type="PATRIC" id="fig|272623.7.peg.2425"/>
<dbReference type="eggNOG" id="COG0480">
    <property type="taxonomic scope" value="Bacteria"/>
</dbReference>
<dbReference type="HOGENOM" id="CLU_002794_4_1_9"/>
<dbReference type="OrthoDB" id="9804431at2"/>
<dbReference type="Proteomes" id="UP000002196">
    <property type="component" value="Chromosome"/>
</dbReference>
<dbReference type="GO" id="GO:0005737">
    <property type="term" value="C:cytoplasm"/>
    <property type="evidence" value="ECO:0007669"/>
    <property type="project" value="UniProtKB-SubCell"/>
</dbReference>
<dbReference type="GO" id="GO:0005525">
    <property type="term" value="F:GTP binding"/>
    <property type="evidence" value="ECO:0007669"/>
    <property type="project" value="UniProtKB-UniRule"/>
</dbReference>
<dbReference type="GO" id="GO:0003924">
    <property type="term" value="F:GTPase activity"/>
    <property type="evidence" value="ECO:0007669"/>
    <property type="project" value="InterPro"/>
</dbReference>
<dbReference type="GO" id="GO:0003746">
    <property type="term" value="F:translation elongation factor activity"/>
    <property type="evidence" value="ECO:0007669"/>
    <property type="project" value="UniProtKB-UniRule"/>
</dbReference>
<dbReference type="GO" id="GO:0032790">
    <property type="term" value="P:ribosome disassembly"/>
    <property type="evidence" value="ECO:0007669"/>
    <property type="project" value="TreeGrafter"/>
</dbReference>
<dbReference type="CDD" id="cd01886">
    <property type="entry name" value="EF-G"/>
    <property type="match status" value="1"/>
</dbReference>
<dbReference type="CDD" id="cd16262">
    <property type="entry name" value="EFG_III"/>
    <property type="match status" value="1"/>
</dbReference>
<dbReference type="CDD" id="cd01434">
    <property type="entry name" value="EFG_mtEFG1_IV"/>
    <property type="match status" value="1"/>
</dbReference>
<dbReference type="CDD" id="cd03713">
    <property type="entry name" value="EFG_mtEFG_C"/>
    <property type="match status" value="1"/>
</dbReference>
<dbReference type="CDD" id="cd04088">
    <property type="entry name" value="EFG_mtEFG_II"/>
    <property type="match status" value="1"/>
</dbReference>
<dbReference type="FunFam" id="2.40.30.10:FF:000006">
    <property type="entry name" value="Elongation factor G"/>
    <property type="match status" value="1"/>
</dbReference>
<dbReference type="FunFam" id="3.30.230.10:FF:000003">
    <property type="entry name" value="Elongation factor G"/>
    <property type="match status" value="1"/>
</dbReference>
<dbReference type="FunFam" id="3.30.70.240:FF:000001">
    <property type="entry name" value="Elongation factor G"/>
    <property type="match status" value="1"/>
</dbReference>
<dbReference type="FunFam" id="3.30.70.870:FF:000001">
    <property type="entry name" value="Elongation factor G"/>
    <property type="match status" value="1"/>
</dbReference>
<dbReference type="FunFam" id="3.40.50.300:FF:000029">
    <property type="entry name" value="Elongation factor G"/>
    <property type="match status" value="1"/>
</dbReference>
<dbReference type="Gene3D" id="3.30.230.10">
    <property type="match status" value="1"/>
</dbReference>
<dbReference type="Gene3D" id="3.30.70.240">
    <property type="match status" value="1"/>
</dbReference>
<dbReference type="Gene3D" id="3.30.70.870">
    <property type="entry name" value="Elongation Factor G (Translational Gtpase), domain 3"/>
    <property type="match status" value="1"/>
</dbReference>
<dbReference type="Gene3D" id="3.40.50.300">
    <property type="entry name" value="P-loop containing nucleotide triphosphate hydrolases"/>
    <property type="match status" value="1"/>
</dbReference>
<dbReference type="Gene3D" id="2.40.30.10">
    <property type="entry name" value="Translation factors"/>
    <property type="match status" value="1"/>
</dbReference>
<dbReference type="HAMAP" id="MF_00054_B">
    <property type="entry name" value="EF_G_EF_2_B"/>
    <property type="match status" value="1"/>
</dbReference>
<dbReference type="InterPro" id="IPR053905">
    <property type="entry name" value="EF-G-like_DII"/>
</dbReference>
<dbReference type="InterPro" id="IPR041095">
    <property type="entry name" value="EFG_II"/>
</dbReference>
<dbReference type="InterPro" id="IPR009022">
    <property type="entry name" value="EFG_III"/>
</dbReference>
<dbReference type="InterPro" id="IPR035647">
    <property type="entry name" value="EFG_III/V"/>
</dbReference>
<dbReference type="InterPro" id="IPR047872">
    <property type="entry name" value="EFG_IV"/>
</dbReference>
<dbReference type="InterPro" id="IPR035649">
    <property type="entry name" value="EFG_V"/>
</dbReference>
<dbReference type="InterPro" id="IPR000640">
    <property type="entry name" value="EFG_V-like"/>
</dbReference>
<dbReference type="InterPro" id="IPR031157">
    <property type="entry name" value="G_TR_CS"/>
</dbReference>
<dbReference type="InterPro" id="IPR027417">
    <property type="entry name" value="P-loop_NTPase"/>
</dbReference>
<dbReference type="InterPro" id="IPR020568">
    <property type="entry name" value="Ribosomal_Su5_D2-typ_SF"/>
</dbReference>
<dbReference type="InterPro" id="IPR014721">
    <property type="entry name" value="Ribsml_uS5_D2-typ_fold_subgr"/>
</dbReference>
<dbReference type="InterPro" id="IPR005225">
    <property type="entry name" value="Small_GTP-bd"/>
</dbReference>
<dbReference type="InterPro" id="IPR000795">
    <property type="entry name" value="T_Tr_GTP-bd_dom"/>
</dbReference>
<dbReference type="InterPro" id="IPR009000">
    <property type="entry name" value="Transl_B-barrel_sf"/>
</dbReference>
<dbReference type="InterPro" id="IPR004540">
    <property type="entry name" value="Transl_elong_EFG/EF2"/>
</dbReference>
<dbReference type="InterPro" id="IPR005517">
    <property type="entry name" value="Transl_elong_EFG/EF2_IV"/>
</dbReference>
<dbReference type="NCBIfam" id="TIGR00484">
    <property type="entry name" value="EF-G"/>
    <property type="match status" value="1"/>
</dbReference>
<dbReference type="NCBIfam" id="NF009379">
    <property type="entry name" value="PRK12740.1-3"/>
    <property type="match status" value="1"/>
</dbReference>
<dbReference type="NCBIfam" id="NF009381">
    <property type="entry name" value="PRK12740.1-5"/>
    <property type="match status" value="1"/>
</dbReference>
<dbReference type="NCBIfam" id="TIGR00231">
    <property type="entry name" value="small_GTP"/>
    <property type="match status" value="1"/>
</dbReference>
<dbReference type="PANTHER" id="PTHR43261:SF1">
    <property type="entry name" value="RIBOSOME-RELEASING FACTOR 2, MITOCHONDRIAL"/>
    <property type="match status" value="1"/>
</dbReference>
<dbReference type="PANTHER" id="PTHR43261">
    <property type="entry name" value="TRANSLATION ELONGATION FACTOR G-RELATED"/>
    <property type="match status" value="1"/>
</dbReference>
<dbReference type="Pfam" id="PF22042">
    <property type="entry name" value="EF-G_D2"/>
    <property type="match status" value="1"/>
</dbReference>
<dbReference type="Pfam" id="PF00679">
    <property type="entry name" value="EFG_C"/>
    <property type="match status" value="1"/>
</dbReference>
<dbReference type="Pfam" id="PF14492">
    <property type="entry name" value="EFG_III"/>
    <property type="match status" value="1"/>
</dbReference>
<dbReference type="Pfam" id="PF03764">
    <property type="entry name" value="EFG_IV"/>
    <property type="match status" value="1"/>
</dbReference>
<dbReference type="Pfam" id="PF00009">
    <property type="entry name" value="GTP_EFTU"/>
    <property type="match status" value="1"/>
</dbReference>
<dbReference type="PRINTS" id="PR00315">
    <property type="entry name" value="ELONGATNFCT"/>
</dbReference>
<dbReference type="SMART" id="SM00838">
    <property type="entry name" value="EFG_C"/>
    <property type="match status" value="1"/>
</dbReference>
<dbReference type="SMART" id="SM00889">
    <property type="entry name" value="EFG_IV"/>
    <property type="match status" value="1"/>
</dbReference>
<dbReference type="SUPFAM" id="SSF54980">
    <property type="entry name" value="EF-G C-terminal domain-like"/>
    <property type="match status" value="2"/>
</dbReference>
<dbReference type="SUPFAM" id="SSF52540">
    <property type="entry name" value="P-loop containing nucleoside triphosphate hydrolases"/>
    <property type="match status" value="1"/>
</dbReference>
<dbReference type="SUPFAM" id="SSF54211">
    <property type="entry name" value="Ribosomal protein S5 domain 2-like"/>
    <property type="match status" value="1"/>
</dbReference>
<dbReference type="SUPFAM" id="SSF50447">
    <property type="entry name" value="Translation proteins"/>
    <property type="match status" value="1"/>
</dbReference>
<dbReference type="PROSITE" id="PS00301">
    <property type="entry name" value="G_TR_1"/>
    <property type="match status" value="1"/>
</dbReference>
<dbReference type="PROSITE" id="PS51722">
    <property type="entry name" value="G_TR_2"/>
    <property type="match status" value="1"/>
</dbReference>
<gene>
    <name evidence="1" type="primary">fusA</name>
    <name type="ordered locus">LL2260</name>
    <name type="ORF">L0368</name>
</gene>
<name>EFG_LACLA</name>
<organism>
    <name type="scientific">Lactococcus lactis subsp. lactis (strain IL1403)</name>
    <name type="common">Streptococcus lactis</name>
    <dbReference type="NCBI Taxonomy" id="272623"/>
    <lineage>
        <taxon>Bacteria</taxon>
        <taxon>Bacillati</taxon>
        <taxon>Bacillota</taxon>
        <taxon>Bacilli</taxon>
        <taxon>Lactobacillales</taxon>
        <taxon>Streptococcaceae</taxon>
        <taxon>Lactococcus</taxon>
    </lineage>
</organism>
<sequence>MAREFSLANTRNIGIMAHVDAGKTTTTERVLYYTGKIHKIGETHEGASQMDWMEQEQERGITITSAATTAEWKGNRVNIIDTPGHVDFTIEVQRSLRVLDGAVTVLDAQSGVEPQTETVWRQATEYGVPRIVFANKMDKIGADFYYSLSTLGDRLGANAHPIQIPIGAEDDFIGIIDLVTMKSEIYTNDLGTDIKETVVGSDEFNAELAALDFNAEEYTELANEWREKLIEAIADFDEDIMEKYFAGEEIPEAELKAAIRKATINVDFYPMLAGSAFKNKGVQMMLDAVIDYLPSPLDIPAIQGVNPDTDEEDERPASDEEPFAALAFKIMTDPFVGRLSFFRVYSGTLDAGSYVLNTSKGKRERIGRILQMHANTRKEIQTVYAGDIAAAVGLKNTTTGDSLTDEKAKIILESIEVPEPVIQLMVEPKTKADQDKMGVALQKLAEEDPTFRVETNPETGETVISGMGELHLDVLVDRMKREFKVEANVGAPQVAYRETFRAGTSARGFFKRQSGGKGQYGDVWIEFTPNEEGAGFEFENAIVGGVVPREFVPAVEKGLVETMANGVLAGYPMVDIKAKLYDGSYHDVDSSETAFKVAASLAMKEAAKTAKPAILEPMMKVTITVPEENLGDIMGHVTARRGQVNSMEAHGKSQIVNAFVPLAEMFGYATTLRSSTQGRGTFMMVFDHYSDVPKSVQEEIIAKNGRNAD</sequence>
<keyword id="KW-0963">Cytoplasm</keyword>
<keyword id="KW-0251">Elongation factor</keyword>
<keyword id="KW-0342">GTP-binding</keyword>
<keyword id="KW-0547">Nucleotide-binding</keyword>
<keyword id="KW-0648">Protein biosynthesis</keyword>
<keyword id="KW-1185">Reference proteome</keyword>
<reference key="1">
    <citation type="journal article" date="2001" name="Genome Res.">
        <title>The complete genome sequence of the lactic acid bacterium Lactococcus lactis ssp. lactis IL1403.</title>
        <authorList>
            <person name="Bolotin A."/>
            <person name="Wincker P."/>
            <person name="Mauger S."/>
            <person name="Jaillon O."/>
            <person name="Malarme K."/>
            <person name="Weissenbach J."/>
            <person name="Ehrlich S.D."/>
            <person name="Sorokin A."/>
        </authorList>
    </citation>
    <scope>NUCLEOTIDE SEQUENCE [LARGE SCALE GENOMIC DNA]</scope>
    <source>
        <strain>IL1403</strain>
    </source>
</reference>
<proteinExistence type="inferred from homology"/>